<accession>A6TSF8</accession>
<name>PXPA_ALKMQ</name>
<comment type="function">
    <text evidence="1">Catalyzes the cleavage of 5-oxoproline to form L-glutamate coupled to the hydrolysis of ATP to ADP and inorganic phosphate.</text>
</comment>
<comment type="catalytic activity">
    <reaction evidence="1">
        <text>5-oxo-L-proline + ATP + 2 H2O = L-glutamate + ADP + phosphate + H(+)</text>
        <dbReference type="Rhea" id="RHEA:10348"/>
        <dbReference type="ChEBI" id="CHEBI:15377"/>
        <dbReference type="ChEBI" id="CHEBI:15378"/>
        <dbReference type="ChEBI" id="CHEBI:29985"/>
        <dbReference type="ChEBI" id="CHEBI:30616"/>
        <dbReference type="ChEBI" id="CHEBI:43474"/>
        <dbReference type="ChEBI" id="CHEBI:58402"/>
        <dbReference type="ChEBI" id="CHEBI:456216"/>
        <dbReference type="EC" id="3.5.2.9"/>
    </reaction>
</comment>
<comment type="subunit">
    <text evidence="1">Forms a complex composed of PxpA, PxpB and PxpC.</text>
</comment>
<comment type="similarity">
    <text evidence="1">Belongs to the LamB/PxpA family.</text>
</comment>
<dbReference type="EC" id="3.5.2.9" evidence="1"/>
<dbReference type="EMBL" id="CP000724">
    <property type="protein sequence ID" value="ABR49126.1"/>
    <property type="molecule type" value="Genomic_DNA"/>
</dbReference>
<dbReference type="RefSeq" id="WP_012064094.1">
    <property type="nucleotide sequence ID" value="NC_009633.1"/>
</dbReference>
<dbReference type="SMR" id="A6TSF8"/>
<dbReference type="STRING" id="293826.Amet_2977"/>
<dbReference type="KEGG" id="amt:Amet_2977"/>
<dbReference type="eggNOG" id="COG1540">
    <property type="taxonomic scope" value="Bacteria"/>
</dbReference>
<dbReference type="HOGENOM" id="CLU_069535_0_0_9"/>
<dbReference type="OrthoDB" id="9773478at2"/>
<dbReference type="Proteomes" id="UP000001572">
    <property type="component" value="Chromosome"/>
</dbReference>
<dbReference type="GO" id="GO:0017168">
    <property type="term" value="F:5-oxoprolinase (ATP-hydrolyzing) activity"/>
    <property type="evidence" value="ECO:0007669"/>
    <property type="project" value="UniProtKB-UniRule"/>
</dbReference>
<dbReference type="GO" id="GO:0005524">
    <property type="term" value="F:ATP binding"/>
    <property type="evidence" value="ECO:0007669"/>
    <property type="project" value="UniProtKB-UniRule"/>
</dbReference>
<dbReference type="GO" id="GO:0005975">
    <property type="term" value="P:carbohydrate metabolic process"/>
    <property type="evidence" value="ECO:0007669"/>
    <property type="project" value="InterPro"/>
</dbReference>
<dbReference type="CDD" id="cd10787">
    <property type="entry name" value="LamB_YcsF_like"/>
    <property type="match status" value="1"/>
</dbReference>
<dbReference type="Gene3D" id="3.20.20.370">
    <property type="entry name" value="Glycoside hydrolase/deacetylase"/>
    <property type="match status" value="1"/>
</dbReference>
<dbReference type="HAMAP" id="MF_00691">
    <property type="entry name" value="PxpA"/>
    <property type="match status" value="1"/>
</dbReference>
<dbReference type="InterPro" id="IPR011330">
    <property type="entry name" value="Glyco_hydro/deAcase_b/a-brl"/>
</dbReference>
<dbReference type="InterPro" id="IPR005501">
    <property type="entry name" value="LamB/YcsF/PxpA-like"/>
</dbReference>
<dbReference type="NCBIfam" id="NF003814">
    <property type="entry name" value="PRK05406.1-3"/>
    <property type="match status" value="1"/>
</dbReference>
<dbReference type="NCBIfam" id="NF003816">
    <property type="entry name" value="PRK05406.1-5"/>
    <property type="match status" value="1"/>
</dbReference>
<dbReference type="PANTHER" id="PTHR30292:SF0">
    <property type="entry name" value="5-OXOPROLINASE SUBUNIT A"/>
    <property type="match status" value="1"/>
</dbReference>
<dbReference type="PANTHER" id="PTHR30292">
    <property type="entry name" value="UNCHARACTERIZED PROTEIN YBGL-RELATED"/>
    <property type="match status" value="1"/>
</dbReference>
<dbReference type="Pfam" id="PF03746">
    <property type="entry name" value="LamB_YcsF"/>
    <property type="match status" value="1"/>
</dbReference>
<dbReference type="SUPFAM" id="SSF88713">
    <property type="entry name" value="Glycoside hydrolase/deacetylase"/>
    <property type="match status" value="1"/>
</dbReference>
<gene>
    <name evidence="1" type="primary">pxpA</name>
    <name type="ordered locus">Amet_2977</name>
</gene>
<proteinExistence type="inferred from homology"/>
<feature type="chain" id="PRO_1000062019" description="5-oxoprolinase subunit A">
    <location>
        <begin position="1"/>
        <end position="256"/>
    </location>
</feature>
<evidence type="ECO:0000255" key="1">
    <source>
        <dbReference type="HAMAP-Rule" id="MF_00691"/>
    </source>
</evidence>
<keyword id="KW-0067">ATP-binding</keyword>
<keyword id="KW-0378">Hydrolase</keyword>
<keyword id="KW-0547">Nucleotide-binding</keyword>
<keyword id="KW-1185">Reference proteome</keyword>
<organism>
    <name type="scientific">Alkaliphilus metalliredigens (strain QYMF)</name>
    <dbReference type="NCBI Taxonomy" id="293826"/>
    <lineage>
        <taxon>Bacteria</taxon>
        <taxon>Bacillati</taxon>
        <taxon>Bacillota</taxon>
        <taxon>Clostridia</taxon>
        <taxon>Peptostreptococcales</taxon>
        <taxon>Natronincolaceae</taxon>
        <taxon>Alkaliphilus</taxon>
    </lineage>
</organism>
<protein>
    <recommendedName>
        <fullName evidence="1">5-oxoprolinase subunit A</fullName>
        <shortName evidence="1">5-OPase subunit A</shortName>
        <ecNumber evidence="1">3.5.2.9</ecNumber>
    </recommendedName>
    <alternativeName>
        <fullName evidence="1">5-oxoprolinase (ATP-hydrolyzing) subunit A</fullName>
    </alternativeName>
</protein>
<sequence>MYQVDLNSDIGESFGAYELGMDGEVVKYITSANIACGWHAGDPMVMEKTVQAAIRNKVAIGAHPGFPDLMGFGRRNMVVTQEEAKAYVKYQIGALWAFTKAAGVAIQHVKPHGALYNMAAKDEGLAKAIAEAVYEIDPNIILVGLANSKMTEVGEKLGLKVAHEVFADRAYNSDGTLVSRNTKGAVIHDSDLAVARVVRMIKKGKVEAINGEDVSIKAHSICVHGDNEHALEFVNKIRETLGKEEIQVISMDALLK</sequence>
<reference key="1">
    <citation type="journal article" date="2016" name="Genome Announc.">
        <title>Complete genome sequence of Alkaliphilus metalliredigens strain QYMF, an alkaliphilic and metal-reducing bacterium isolated from borax-contaminated leachate ponds.</title>
        <authorList>
            <person name="Hwang C."/>
            <person name="Copeland A."/>
            <person name="Lucas S."/>
            <person name="Lapidus A."/>
            <person name="Barry K."/>
            <person name="Detter J.C."/>
            <person name="Glavina Del Rio T."/>
            <person name="Hammon N."/>
            <person name="Israni S."/>
            <person name="Dalin E."/>
            <person name="Tice H."/>
            <person name="Pitluck S."/>
            <person name="Chertkov O."/>
            <person name="Brettin T."/>
            <person name="Bruce D."/>
            <person name="Han C."/>
            <person name="Schmutz J."/>
            <person name="Larimer F."/>
            <person name="Land M.L."/>
            <person name="Hauser L."/>
            <person name="Kyrpides N."/>
            <person name="Mikhailova N."/>
            <person name="Ye Q."/>
            <person name="Zhou J."/>
            <person name="Richardson P."/>
            <person name="Fields M.W."/>
        </authorList>
    </citation>
    <scope>NUCLEOTIDE SEQUENCE [LARGE SCALE GENOMIC DNA]</scope>
    <source>
        <strain>QYMF</strain>
    </source>
</reference>